<dbReference type="EMBL" id="CP000260">
    <property type="protein sequence ID" value="ABF34712.1"/>
    <property type="molecule type" value="Genomic_DNA"/>
</dbReference>
<dbReference type="RefSeq" id="WP_002988205.1">
    <property type="nucleotide sequence ID" value="NZ_CVUH01000011.1"/>
</dbReference>
<dbReference type="SMR" id="Q1JF47"/>
<dbReference type="KEGG" id="sph:MGAS10270_Spy1647"/>
<dbReference type="HOGENOM" id="CLU_140930_1_1_9"/>
<dbReference type="Proteomes" id="UP000002436">
    <property type="component" value="Chromosome"/>
</dbReference>
<dbReference type="GO" id="GO:0043590">
    <property type="term" value="C:bacterial nucleoid"/>
    <property type="evidence" value="ECO:0007669"/>
    <property type="project" value="UniProtKB-UniRule"/>
</dbReference>
<dbReference type="GO" id="GO:0005829">
    <property type="term" value="C:cytosol"/>
    <property type="evidence" value="ECO:0007669"/>
    <property type="project" value="TreeGrafter"/>
</dbReference>
<dbReference type="GO" id="GO:0003677">
    <property type="term" value="F:DNA binding"/>
    <property type="evidence" value="ECO:0007669"/>
    <property type="project" value="UniProtKB-UniRule"/>
</dbReference>
<dbReference type="Gene3D" id="3.30.1310.10">
    <property type="entry name" value="Nucleoid-associated protein YbaB-like domain"/>
    <property type="match status" value="1"/>
</dbReference>
<dbReference type="HAMAP" id="MF_00274">
    <property type="entry name" value="DNA_YbaB_EbfC"/>
    <property type="match status" value="1"/>
</dbReference>
<dbReference type="InterPro" id="IPR036894">
    <property type="entry name" value="YbaB-like_sf"/>
</dbReference>
<dbReference type="InterPro" id="IPR004401">
    <property type="entry name" value="YbaB/EbfC"/>
</dbReference>
<dbReference type="NCBIfam" id="TIGR00103">
    <property type="entry name" value="DNA_YbaB_EbfC"/>
    <property type="match status" value="1"/>
</dbReference>
<dbReference type="PANTHER" id="PTHR33449">
    <property type="entry name" value="NUCLEOID-ASSOCIATED PROTEIN YBAB"/>
    <property type="match status" value="1"/>
</dbReference>
<dbReference type="PANTHER" id="PTHR33449:SF1">
    <property type="entry name" value="NUCLEOID-ASSOCIATED PROTEIN YBAB"/>
    <property type="match status" value="1"/>
</dbReference>
<dbReference type="Pfam" id="PF02575">
    <property type="entry name" value="YbaB_DNA_bd"/>
    <property type="match status" value="1"/>
</dbReference>
<dbReference type="PIRSF" id="PIRSF004555">
    <property type="entry name" value="UCP004555"/>
    <property type="match status" value="1"/>
</dbReference>
<dbReference type="SUPFAM" id="SSF82607">
    <property type="entry name" value="YbaB-like"/>
    <property type="match status" value="1"/>
</dbReference>
<sequence length="99" mass="10946">MMNMQNMMKQAQKLQKQMEQKQADLAAMQFTGKSAQDLVTATFTGDKKLVGIDFKEAVVDPEDVETLQDMTTQAINDALTQIDEATKKTLGAFAGKLPF</sequence>
<keyword id="KW-0963">Cytoplasm</keyword>
<keyword id="KW-0238">DNA-binding</keyword>
<gene>
    <name type="ordered locus">MGAS10270_Spy1647</name>
</gene>
<reference key="1">
    <citation type="journal article" date="2006" name="Proc. Natl. Acad. Sci. U.S.A.">
        <title>Molecular genetic anatomy of inter- and intraserotype variation in the human bacterial pathogen group A Streptococcus.</title>
        <authorList>
            <person name="Beres S.B."/>
            <person name="Richter E.W."/>
            <person name="Nagiec M.J."/>
            <person name="Sumby P."/>
            <person name="Porcella S.F."/>
            <person name="DeLeo F.R."/>
            <person name="Musser J.M."/>
        </authorList>
    </citation>
    <scope>NUCLEOTIDE SEQUENCE [LARGE SCALE GENOMIC DNA]</scope>
    <source>
        <strain>MGAS10270</strain>
    </source>
</reference>
<evidence type="ECO:0000255" key="1">
    <source>
        <dbReference type="HAMAP-Rule" id="MF_00274"/>
    </source>
</evidence>
<name>Y1647_STRPD</name>
<feature type="chain" id="PRO_1000003840" description="Nucleoid-associated protein MGAS10270_Spy1647">
    <location>
        <begin position="1"/>
        <end position="99"/>
    </location>
</feature>
<comment type="function">
    <text evidence="1">Binds to DNA and alters its conformation. May be involved in regulation of gene expression, nucleoid organization and DNA protection.</text>
</comment>
<comment type="subunit">
    <text evidence="1">Homodimer.</text>
</comment>
<comment type="subcellular location">
    <subcellularLocation>
        <location evidence="1">Cytoplasm</location>
        <location evidence="1">Nucleoid</location>
    </subcellularLocation>
</comment>
<comment type="similarity">
    <text evidence="1">Belongs to the YbaB/EbfC family.</text>
</comment>
<protein>
    <recommendedName>
        <fullName evidence="1">Nucleoid-associated protein MGAS10270_Spy1647</fullName>
    </recommendedName>
</protein>
<proteinExistence type="inferred from homology"/>
<organism>
    <name type="scientific">Streptococcus pyogenes serotype M2 (strain MGAS10270)</name>
    <dbReference type="NCBI Taxonomy" id="370552"/>
    <lineage>
        <taxon>Bacteria</taxon>
        <taxon>Bacillati</taxon>
        <taxon>Bacillota</taxon>
        <taxon>Bacilli</taxon>
        <taxon>Lactobacillales</taxon>
        <taxon>Streptococcaceae</taxon>
        <taxon>Streptococcus</taxon>
    </lineage>
</organism>
<accession>Q1JF47</accession>